<organism>
    <name type="scientific">Mannheimia succiniciproducens (strain KCTC 0769BP / MBEL55E)</name>
    <dbReference type="NCBI Taxonomy" id="221988"/>
    <lineage>
        <taxon>Bacteria</taxon>
        <taxon>Pseudomonadati</taxon>
        <taxon>Pseudomonadota</taxon>
        <taxon>Gammaproteobacteria</taxon>
        <taxon>Pasteurellales</taxon>
        <taxon>Pasteurellaceae</taxon>
        <taxon>Basfia</taxon>
    </lineage>
</organism>
<feature type="chain" id="PRO_0000070409" description="Ribosomal RNA large subunit methyltransferase M">
    <location>
        <begin position="1"/>
        <end position="363"/>
    </location>
</feature>
<feature type="active site" description="Proton acceptor" evidence="1">
    <location>
        <position position="313"/>
    </location>
</feature>
<feature type="binding site" evidence="1">
    <location>
        <position position="194"/>
    </location>
    <ligand>
        <name>S-adenosyl-L-methionine</name>
        <dbReference type="ChEBI" id="CHEBI:59789"/>
    </ligand>
</feature>
<feature type="binding site" evidence="1">
    <location>
        <begin position="227"/>
        <end position="230"/>
    </location>
    <ligand>
        <name>S-adenosyl-L-methionine</name>
        <dbReference type="ChEBI" id="CHEBI:59789"/>
    </ligand>
</feature>
<feature type="binding site" evidence="1">
    <location>
        <position position="246"/>
    </location>
    <ligand>
        <name>S-adenosyl-L-methionine</name>
        <dbReference type="ChEBI" id="CHEBI:59789"/>
    </ligand>
</feature>
<feature type="binding site" evidence="1">
    <location>
        <position position="266"/>
    </location>
    <ligand>
        <name>S-adenosyl-L-methionine</name>
        <dbReference type="ChEBI" id="CHEBI:59789"/>
    </ligand>
</feature>
<feature type="binding site" evidence="1">
    <location>
        <position position="284"/>
    </location>
    <ligand>
        <name>S-adenosyl-L-methionine</name>
        <dbReference type="ChEBI" id="CHEBI:59789"/>
    </ligand>
</feature>
<proteinExistence type="inferred from homology"/>
<reference key="1">
    <citation type="journal article" date="2004" name="Nat. Biotechnol.">
        <title>The genome sequence of the capnophilic rumen bacterium Mannheimia succiniciproducens.</title>
        <authorList>
            <person name="Hong S.H."/>
            <person name="Kim J.S."/>
            <person name="Lee S.Y."/>
            <person name="In Y.H."/>
            <person name="Choi S.S."/>
            <person name="Rih J.-K."/>
            <person name="Kim C.H."/>
            <person name="Jeong H."/>
            <person name="Hur C.G."/>
            <person name="Kim J.J."/>
        </authorList>
    </citation>
    <scope>NUCLEOTIDE SEQUENCE [LARGE SCALE GENOMIC DNA]</scope>
    <source>
        <strain>KCTC 0769BP / MBEL55E</strain>
    </source>
</reference>
<protein>
    <recommendedName>
        <fullName evidence="1">Ribosomal RNA large subunit methyltransferase M</fullName>
        <ecNumber evidence="1">2.1.1.186</ecNumber>
    </recommendedName>
    <alternativeName>
        <fullName evidence="1">23S rRNA (cytidine2498-2'-O)-methyltransferase</fullName>
    </alternativeName>
    <alternativeName>
        <fullName evidence="1">23S rRNA 2'-O-ribose methyltransferase RlmM</fullName>
    </alternativeName>
</protein>
<name>RLMM_MANSM</name>
<accession>Q65U59</accession>
<sequence length="363" mass="41794">MNKLALYCRIGFEKETAAEITEKAAEKGVFGFARVNNDSGYVIFECYQEGEADRLAREIPFNQLIFARQMIVISDLLENLPPTDRITPIIEEYNRIGSLVNLHRTTELFVETADTNEAKELSVFCRKFTVPLRQALKKQGYLAFKEVKKSGLTLHIFFVKPNCCYVGYSYNNNHSPNFMGILRLKFPPQAPSRSTLKLHEAILTFLSPEEERKCMNESMYGVDLGACPGGWTYQLVKRGLFVYAVDHGKMAASLHDTGRIDHCPEDGFKFQPPKRSKIDWLVCDMVEQPIRIAALIAKWLVNEWCRESIFNLKLPMKKRYAEVQNCLQLITNELDKAGFKYHIQAKHLYHDREEITVHISVKK</sequence>
<gene>
    <name evidence="1" type="primary">rlmM</name>
    <name type="ordered locus">MS0894</name>
</gene>
<keyword id="KW-0963">Cytoplasm</keyword>
<keyword id="KW-0489">Methyltransferase</keyword>
<keyword id="KW-0698">rRNA processing</keyword>
<keyword id="KW-0949">S-adenosyl-L-methionine</keyword>
<keyword id="KW-0808">Transferase</keyword>
<comment type="function">
    <text evidence="1">Catalyzes the 2'-O-methylation at nucleotide C2498 in 23S rRNA.</text>
</comment>
<comment type="catalytic activity">
    <reaction evidence="1">
        <text>cytidine(2498) in 23S rRNA + S-adenosyl-L-methionine = 2'-O-methylcytidine(2498) in 23S rRNA + S-adenosyl-L-homocysteine + H(+)</text>
        <dbReference type="Rhea" id="RHEA:42788"/>
        <dbReference type="Rhea" id="RHEA-COMP:10244"/>
        <dbReference type="Rhea" id="RHEA-COMP:10245"/>
        <dbReference type="ChEBI" id="CHEBI:15378"/>
        <dbReference type="ChEBI" id="CHEBI:57856"/>
        <dbReference type="ChEBI" id="CHEBI:59789"/>
        <dbReference type="ChEBI" id="CHEBI:74495"/>
        <dbReference type="ChEBI" id="CHEBI:82748"/>
        <dbReference type="EC" id="2.1.1.186"/>
    </reaction>
</comment>
<comment type="subunit">
    <text evidence="1">Monomer.</text>
</comment>
<comment type="subcellular location">
    <subcellularLocation>
        <location evidence="1">Cytoplasm</location>
    </subcellularLocation>
</comment>
<comment type="similarity">
    <text evidence="1">Belongs to the class I-like SAM-binding methyltransferase superfamily. RNA methyltransferase RlmE family. RlmM subfamily.</text>
</comment>
<dbReference type="EC" id="2.1.1.186" evidence="1"/>
<dbReference type="EMBL" id="AE016827">
    <property type="protein sequence ID" value="AAU37501.1"/>
    <property type="molecule type" value="Genomic_DNA"/>
</dbReference>
<dbReference type="RefSeq" id="WP_011200071.1">
    <property type="nucleotide sequence ID" value="NC_006300.1"/>
</dbReference>
<dbReference type="SMR" id="Q65U59"/>
<dbReference type="STRING" id="221988.MS0894"/>
<dbReference type="KEGG" id="msu:MS0894"/>
<dbReference type="eggNOG" id="COG2933">
    <property type="taxonomic scope" value="Bacteria"/>
</dbReference>
<dbReference type="HOGENOM" id="CLU_043780_0_0_6"/>
<dbReference type="OrthoDB" id="154490at2"/>
<dbReference type="Proteomes" id="UP000000607">
    <property type="component" value="Chromosome"/>
</dbReference>
<dbReference type="GO" id="GO:0005737">
    <property type="term" value="C:cytoplasm"/>
    <property type="evidence" value="ECO:0007669"/>
    <property type="project" value="UniProtKB-SubCell"/>
</dbReference>
<dbReference type="GO" id="GO:0008757">
    <property type="term" value="F:S-adenosylmethionine-dependent methyltransferase activity"/>
    <property type="evidence" value="ECO:0007669"/>
    <property type="project" value="UniProtKB-UniRule"/>
</dbReference>
<dbReference type="GO" id="GO:0032259">
    <property type="term" value="P:methylation"/>
    <property type="evidence" value="ECO:0007669"/>
    <property type="project" value="UniProtKB-KW"/>
</dbReference>
<dbReference type="GO" id="GO:0006364">
    <property type="term" value="P:rRNA processing"/>
    <property type="evidence" value="ECO:0007669"/>
    <property type="project" value="UniProtKB-UniRule"/>
</dbReference>
<dbReference type="Gene3D" id="3.30.2300.20">
    <property type="match status" value="1"/>
</dbReference>
<dbReference type="Gene3D" id="3.30.70.2810">
    <property type="match status" value="1"/>
</dbReference>
<dbReference type="Gene3D" id="3.40.50.150">
    <property type="entry name" value="Vaccinia Virus protein VP39"/>
    <property type="match status" value="1"/>
</dbReference>
<dbReference type="HAMAP" id="MF_01551">
    <property type="entry name" value="23SrRNA_methyltr_M"/>
    <property type="match status" value="1"/>
</dbReference>
<dbReference type="InterPro" id="IPR040739">
    <property type="entry name" value="RlmM_FDX"/>
</dbReference>
<dbReference type="InterPro" id="IPR048646">
    <property type="entry name" value="RlmM_THUMP-like"/>
</dbReference>
<dbReference type="InterPro" id="IPR002877">
    <property type="entry name" value="RNA_MeTrfase_FtsJ_dom"/>
</dbReference>
<dbReference type="InterPro" id="IPR011224">
    <property type="entry name" value="rRNA_MeTrfase_M"/>
</dbReference>
<dbReference type="InterPro" id="IPR029063">
    <property type="entry name" value="SAM-dependent_MTases_sf"/>
</dbReference>
<dbReference type="NCBIfam" id="NF008734">
    <property type="entry name" value="PRK11760.1"/>
    <property type="match status" value="1"/>
</dbReference>
<dbReference type="PANTHER" id="PTHR37524">
    <property type="entry name" value="RIBOSOMAL RNA LARGE SUBUNIT METHYLTRANSFERASE M"/>
    <property type="match status" value="1"/>
</dbReference>
<dbReference type="PANTHER" id="PTHR37524:SF2">
    <property type="entry name" value="RIBOSOMAL RNA METHYLTRANSFERASE FTSJ DOMAIN-CONTAINING PROTEIN"/>
    <property type="match status" value="1"/>
</dbReference>
<dbReference type="Pfam" id="PF01728">
    <property type="entry name" value="FtsJ"/>
    <property type="match status" value="1"/>
</dbReference>
<dbReference type="Pfam" id="PF18125">
    <property type="entry name" value="RlmM_FDX"/>
    <property type="match status" value="1"/>
</dbReference>
<dbReference type="Pfam" id="PF21239">
    <property type="entry name" value="RLMM_N"/>
    <property type="match status" value="1"/>
</dbReference>
<dbReference type="PIRSF" id="PIRSF028774">
    <property type="entry name" value="UCP028774"/>
    <property type="match status" value="1"/>
</dbReference>
<dbReference type="SUPFAM" id="SSF53335">
    <property type="entry name" value="S-adenosyl-L-methionine-dependent methyltransferases"/>
    <property type="match status" value="1"/>
</dbReference>
<evidence type="ECO:0000255" key="1">
    <source>
        <dbReference type="HAMAP-Rule" id="MF_01551"/>
    </source>
</evidence>